<keyword id="KW-0029">Amino-acid transport</keyword>
<keyword id="KW-0067">ATP-binding</keyword>
<keyword id="KW-1003">Cell membrane</keyword>
<keyword id="KW-0472">Membrane</keyword>
<keyword id="KW-0547">Nucleotide-binding</keyword>
<keyword id="KW-1278">Translocase</keyword>
<keyword id="KW-0813">Transport</keyword>
<feature type="chain" id="PRO_0000270411" description="Methionine import ATP-binding protein MetN">
    <location>
        <begin position="1"/>
        <end position="356"/>
    </location>
</feature>
<feature type="domain" description="ABC transporter" evidence="1">
    <location>
        <begin position="7"/>
        <end position="250"/>
    </location>
</feature>
<feature type="binding site" evidence="1">
    <location>
        <begin position="43"/>
        <end position="50"/>
    </location>
    <ligand>
        <name>ATP</name>
        <dbReference type="ChEBI" id="CHEBI:30616"/>
    </ligand>
</feature>
<reference key="1">
    <citation type="journal article" date="2005" name="Proc. Natl. Acad. Sci. U.S.A.">
        <title>Genome analysis of multiple pathogenic isolates of Streptococcus agalactiae: implications for the microbial 'pan-genome'.</title>
        <authorList>
            <person name="Tettelin H."/>
            <person name="Masignani V."/>
            <person name="Cieslewicz M.J."/>
            <person name="Donati C."/>
            <person name="Medini D."/>
            <person name="Ward N.L."/>
            <person name="Angiuoli S.V."/>
            <person name="Crabtree J."/>
            <person name="Jones A.L."/>
            <person name="Durkin A.S."/>
            <person name="DeBoy R.T."/>
            <person name="Davidsen T.M."/>
            <person name="Mora M."/>
            <person name="Scarselli M."/>
            <person name="Margarit y Ros I."/>
            <person name="Peterson J.D."/>
            <person name="Hauser C.R."/>
            <person name="Sundaram J.P."/>
            <person name="Nelson W.C."/>
            <person name="Madupu R."/>
            <person name="Brinkac L.M."/>
            <person name="Dodson R.J."/>
            <person name="Rosovitz M.J."/>
            <person name="Sullivan S.A."/>
            <person name="Daugherty S.C."/>
            <person name="Haft D.H."/>
            <person name="Selengut J."/>
            <person name="Gwinn M.L."/>
            <person name="Zhou L."/>
            <person name="Zafar N."/>
            <person name="Khouri H."/>
            <person name="Radune D."/>
            <person name="Dimitrov G."/>
            <person name="Watkins K."/>
            <person name="O'Connor K.J."/>
            <person name="Smith S."/>
            <person name="Utterback T.R."/>
            <person name="White O."/>
            <person name="Rubens C.E."/>
            <person name="Grandi G."/>
            <person name="Madoff L.C."/>
            <person name="Kasper D.L."/>
            <person name="Telford J.L."/>
            <person name="Wessels M.R."/>
            <person name="Rappuoli R."/>
            <person name="Fraser C.M."/>
        </authorList>
    </citation>
    <scope>NUCLEOTIDE SEQUENCE [LARGE SCALE GENOMIC DNA]</scope>
    <source>
        <strain>ATCC 27591 / A909 / CDC SS700</strain>
    </source>
</reference>
<proteinExistence type="inferred from homology"/>
<dbReference type="EC" id="7.4.2.11" evidence="1"/>
<dbReference type="EMBL" id="CP000114">
    <property type="protein sequence ID" value="ABA45382.1"/>
    <property type="molecule type" value="Genomic_DNA"/>
</dbReference>
<dbReference type="RefSeq" id="WP_000032379.1">
    <property type="nucleotide sequence ID" value="NC_007432.1"/>
</dbReference>
<dbReference type="SMR" id="Q3JZP8"/>
<dbReference type="KEGG" id="sak:SAK_1653"/>
<dbReference type="HOGENOM" id="CLU_000604_1_3_9"/>
<dbReference type="GO" id="GO:0005886">
    <property type="term" value="C:plasma membrane"/>
    <property type="evidence" value="ECO:0007669"/>
    <property type="project" value="UniProtKB-SubCell"/>
</dbReference>
<dbReference type="GO" id="GO:0033232">
    <property type="term" value="F:ABC-type D-methionine transporter activity"/>
    <property type="evidence" value="ECO:0007669"/>
    <property type="project" value="UniProtKB-EC"/>
</dbReference>
<dbReference type="GO" id="GO:0005524">
    <property type="term" value="F:ATP binding"/>
    <property type="evidence" value="ECO:0007669"/>
    <property type="project" value="UniProtKB-KW"/>
</dbReference>
<dbReference type="GO" id="GO:0016887">
    <property type="term" value="F:ATP hydrolysis activity"/>
    <property type="evidence" value="ECO:0007669"/>
    <property type="project" value="InterPro"/>
</dbReference>
<dbReference type="CDD" id="cd03258">
    <property type="entry name" value="ABC_MetN_methionine_transporter"/>
    <property type="match status" value="1"/>
</dbReference>
<dbReference type="FunFam" id="3.40.50.300:FF:000056">
    <property type="entry name" value="Cell division ATP-binding protein FtsE"/>
    <property type="match status" value="1"/>
</dbReference>
<dbReference type="Gene3D" id="3.30.70.260">
    <property type="match status" value="1"/>
</dbReference>
<dbReference type="Gene3D" id="3.40.50.300">
    <property type="entry name" value="P-loop containing nucleotide triphosphate hydrolases"/>
    <property type="match status" value="1"/>
</dbReference>
<dbReference type="InterPro" id="IPR003593">
    <property type="entry name" value="AAA+_ATPase"/>
</dbReference>
<dbReference type="InterPro" id="IPR003439">
    <property type="entry name" value="ABC_transporter-like_ATP-bd"/>
</dbReference>
<dbReference type="InterPro" id="IPR017871">
    <property type="entry name" value="ABC_transporter-like_CS"/>
</dbReference>
<dbReference type="InterPro" id="IPR045865">
    <property type="entry name" value="ACT-like_dom_sf"/>
</dbReference>
<dbReference type="InterPro" id="IPR041701">
    <property type="entry name" value="MetN_ABC"/>
</dbReference>
<dbReference type="InterPro" id="IPR050086">
    <property type="entry name" value="MetN_ABC_transporter-like"/>
</dbReference>
<dbReference type="InterPro" id="IPR018449">
    <property type="entry name" value="NIL_domain"/>
</dbReference>
<dbReference type="InterPro" id="IPR027417">
    <property type="entry name" value="P-loop_NTPase"/>
</dbReference>
<dbReference type="PANTHER" id="PTHR43166">
    <property type="entry name" value="AMINO ACID IMPORT ATP-BINDING PROTEIN"/>
    <property type="match status" value="1"/>
</dbReference>
<dbReference type="PANTHER" id="PTHR43166:SF30">
    <property type="entry name" value="METHIONINE IMPORT ATP-BINDING PROTEIN METN"/>
    <property type="match status" value="1"/>
</dbReference>
<dbReference type="Pfam" id="PF00005">
    <property type="entry name" value="ABC_tran"/>
    <property type="match status" value="1"/>
</dbReference>
<dbReference type="Pfam" id="PF09383">
    <property type="entry name" value="NIL"/>
    <property type="match status" value="1"/>
</dbReference>
<dbReference type="SMART" id="SM00382">
    <property type="entry name" value="AAA"/>
    <property type="match status" value="1"/>
</dbReference>
<dbReference type="SMART" id="SM00930">
    <property type="entry name" value="NIL"/>
    <property type="match status" value="1"/>
</dbReference>
<dbReference type="SUPFAM" id="SSF55021">
    <property type="entry name" value="ACT-like"/>
    <property type="match status" value="1"/>
</dbReference>
<dbReference type="SUPFAM" id="SSF52540">
    <property type="entry name" value="P-loop containing nucleoside triphosphate hydrolases"/>
    <property type="match status" value="1"/>
</dbReference>
<dbReference type="PROSITE" id="PS00211">
    <property type="entry name" value="ABC_TRANSPORTER_1"/>
    <property type="match status" value="1"/>
</dbReference>
<dbReference type="PROSITE" id="PS50893">
    <property type="entry name" value="ABC_TRANSPORTER_2"/>
    <property type="match status" value="1"/>
</dbReference>
<dbReference type="PROSITE" id="PS51264">
    <property type="entry name" value="METN"/>
    <property type="match status" value="1"/>
</dbReference>
<accession>Q3JZP8</accession>
<gene>
    <name evidence="1" type="primary">metN</name>
    <name type="ordered locus">SAK_1653</name>
</gene>
<organism>
    <name type="scientific">Streptococcus agalactiae serotype Ia (strain ATCC 27591 / A909 / CDC SS700)</name>
    <dbReference type="NCBI Taxonomy" id="205921"/>
    <lineage>
        <taxon>Bacteria</taxon>
        <taxon>Bacillati</taxon>
        <taxon>Bacillota</taxon>
        <taxon>Bacilli</taxon>
        <taxon>Lactobacillales</taxon>
        <taxon>Streptococcaceae</taxon>
        <taxon>Streptococcus</taxon>
    </lineage>
</organism>
<name>METN_STRA1</name>
<protein>
    <recommendedName>
        <fullName evidence="1">Methionine import ATP-binding protein MetN</fullName>
        <ecNumber evidence="1">7.4.2.11</ecNumber>
    </recommendedName>
</protein>
<sequence>MSKEPIIKLDNIDVTFHQKKREINAVKDVTIHINQGDIYGIVGYSGAGKSTLVRVINLLQEPSAGKITIDDQVIYDNKVTLTSTQLREQRREIGMIFQHFNLMSQLTAEQNVAFALKHSGLSKEAKAAKVAKLLELVGLSDRAQNYPSQLSGGQKQRVAIARALANDPKILISDESTSALDPKTTKQILALLQDLNKKLGLTIVLITHEMQIVKDIANRVAVMQNGKLIEEGSVLDIFSHPRESLTQDFIKIATGIDEAMLKIEQQEVVKNLPVGSKLVQLKYAGHSTDEPLLNQIYKEFEVTANILYGNIEILDGIPVGEMVVILSGDEEKLRQACQAITDSQVQLTLLKEGGKA</sequence>
<evidence type="ECO:0000255" key="1">
    <source>
        <dbReference type="HAMAP-Rule" id="MF_01719"/>
    </source>
</evidence>
<comment type="function">
    <text evidence="1">Part of the ABC transporter complex MetNIQ involved in methionine import. Responsible for energy coupling to the transport system.</text>
</comment>
<comment type="catalytic activity">
    <reaction evidence="1">
        <text>L-methionine(out) + ATP + H2O = L-methionine(in) + ADP + phosphate + H(+)</text>
        <dbReference type="Rhea" id="RHEA:29779"/>
        <dbReference type="ChEBI" id="CHEBI:15377"/>
        <dbReference type="ChEBI" id="CHEBI:15378"/>
        <dbReference type="ChEBI" id="CHEBI:30616"/>
        <dbReference type="ChEBI" id="CHEBI:43474"/>
        <dbReference type="ChEBI" id="CHEBI:57844"/>
        <dbReference type="ChEBI" id="CHEBI:456216"/>
        <dbReference type="EC" id="7.4.2.11"/>
    </reaction>
</comment>
<comment type="catalytic activity">
    <reaction evidence="1">
        <text>D-methionine(out) + ATP + H2O = D-methionine(in) + ADP + phosphate + H(+)</text>
        <dbReference type="Rhea" id="RHEA:29767"/>
        <dbReference type="ChEBI" id="CHEBI:15377"/>
        <dbReference type="ChEBI" id="CHEBI:15378"/>
        <dbReference type="ChEBI" id="CHEBI:30616"/>
        <dbReference type="ChEBI" id="CHEBI:43474"/>
        <dbReference type="ChEBI" id="CHEBI:57932"/>
        <dbReference type="ChEBI" id="CHEBI:456216"/>
        <dbReference type="EC" id="7.4.2.11"/>
    </reaction>
</comment>
<comment type="subunit">
    <text evidence="1">The complex is composed of two ATP-binding proteins (MetN), two transmembrane proteins (MetI) and a solute-binding protein (MetQ).</text>
</comment>
<comment type="subcellular location">
    <subcellularLocation>
        <location evidence="1">Cell membrane</location>
        <topology evidence="1">Peripheral membrane protein</topology>
    </subcellularLocation>
</comment>
<comment type="similarity">
    <text evidence="1">Belongs to the ABC transporter superfamily. Methionine importer (TC 3.A.1.24) family.</text>
</comment>